<reference key="1">
    <citation type="journal article" date="2003" name="Nat. Genet.">
        <title>Comparative analysis of the genome sequences of Bordetella pertussis, Bordetella parapertussis and Bordetella bronchiseptica.</title>
        <authorList>
            <person name="Parkhill J."/>
            <person name="Sebaihia M."/>
            <person name="Preston A."/>
            <person name="Murphy L.D."/>
            <person name="Thomson N.R."/>
            <person name="Harris D.E."/>
            <person name="Holden M.T.G."/>
            <person name="Churcher C.M."/>
            <person name="Bentley S.D."/>
            <person name="Mungall K.L."/>
            <person name="Cerdeno-Tarraga A.-M."/>
            <person name="Temple L."/>
            <person name="James K.D."/>
            <person name="Harris B."/>
            <person name="Quail M.A."/>
            <person name="Achtman M."/>
            <person name="Atkin R."/>
            <person name="Baker S."/>
            <person name="Basham D."/>
            <person name="Bason N."/>
            <person name="Cherevach I."/>
            <person name="Chillingworth T."/>
            <person name="Collins M."/>
            <person name="Cronin A."/>
            <person name="Davis P."/>
            <person name="Doggett J."/>
            <person name="Feltwell T."/>
            <person name="Goble A."/>
            <person name="Hamlin N."/>
            <person name="Hauser H."/>
            <person name="Holroyd S."/>
            <person name="Jagels K."/>
            <person name="Leather S."/>
            <person name="Moule S."/>
            <person name="Norberczak H."/>
            <person name="O'Neil S."/>
            <person name="Ormond D."/>
            <person name="Price C."/>
            <person name="Rabbinowitsch E."/>
            <person name="Rutter S."/>
            <person name="Sanders M."/>
            <person name="Saunders D."/>
            <person name="Seeger K."/>
            <person name="Sharp S."/>
            <person name="Simmonds M."/>
            <person name="Skelton J."/>
            <person name="Squares R."/>
            <person name="Squares S."/>
            <person name="Stevens K."/>
            <person name="Unwin L."/>
            <person name="Whitehead S."/>
            <person name="Barrell B.G."/>
            <person name="Maskell D.J."/>
        </authorList>
    </citation>
    <scope>NUCLEOTIDE SEQUENCE [LARGE SCALE GENOMIC DNA]</scope>
    <source>
        <strain>ATCC BAA-588 / NCTC 13252 / RB50</strain>
    </source>
</reference>
<dbReference type="EC" id="2.4.2.9" evidence="1"/>
<dbReference type="EMBL" id="BX640441">
    <property type="protein sequence ID" value="CAE31863.1"/>
    <property type="molecule type" value="Genomic_DNA"/>
</dbReference>
<dbReference type="RefSeq" id="WP_003809425.1">
    <property type="nucleotide sequence ID" value="NC_002927.3"/>
</dbReference>
<dbReference type="SMR" id="Q7WMM5"/>
<dbReference type="GeneID" id="93202904"/>
<dbReference type="KEGG" id="bbr:BB1365"/>
<dbReference type="eggNOG" id="COG0035">
    <property type="taxonomic scope" value="Bacteria"/>
</dbReference>
<dbReference type="HOGENOM" id="CLU_067096_2_2_4"/>
<dbReference type="UniPathway" id="UPA00574">
    <property type="reaction ID" value="UER00636"/>
</dbReference>
<dbReference type="Proteomes" id="UP000001027">
    <property type="component" value="Chromosome"/>
</dbReference>
<dbReference type="GO" id="GO:0005525">
    <property type="term" value="F:GTP binding"/>
    <property type="evidence" value="ECO:0007669"/>
    <property type="project" value="UniProtKB-KW"/>
</dbReference>
<dbReference type="GO" id="GO:0000287">
    <property type="term" value="F:magnesium ion binding"/>
    <property type="evidence" value="ECO:0007669"/>
    <property type="project" value="UniProtKB-UniRule"/>
</dbReference>
<dbReference type="GO" id="GO:0004845">
    <property type="term" value="F:uracil phosphoribosyltransferase activity"/>
    <property type="evidence" value="ECO:0007669"/>
    <property type="project" value="UniProtKB-UniRule"/>
</dbReference>
<dbReference type="GO" id="GO:0044206">
    <property type="term" value="P:UMP salvage"/>
    <property type="evidence" value="ECO:0007669"/>
    <property type="project" value="UniProtKB-UniRule"/>
</dbReference>
<dbReference type="GO" id="GO:0006223">
    <property type="term" value="P:uracil salvage"/>
    <property type="evidence" value="ECO:0007669"/>
    <property type="project" value="InterPro"/>
</dbReference>
<dbReference type="CDD" id="cd06223">
    <property type="entry name" value="PRTases_typeI"/>
    <property type="match status" value="1"/>
</dbReference>
<dbReference type="FunFam" id="3.40.50.2020:FF:000003">
    <property type="entry name" value="Uracil phosphoribosyltransferase"/>
    <property type="match status" value="1"/>
</dbReference>
<dbReference type="Gene3D" id="3.40.50.2020">
    <property type="match status" value="1"/>
</dbReference>
<dbReference type="HAMAP" id="MF_01218_B">
    <property type="entry name" value="Upp_B"/>
    <property type="match status" value="1"/>
</dbReference>
<dbReference type="InterPro" id="IPR000836">
    <property type="entry name" value="PRibTrfase_dom"/>
</dbReference>
<dbReference type="InterPro" id="IPR029057">
    <property type="entry name" value="PRTase-like"/>
</dbReference>
<dbReference type="InterPro" id="IPR034332">
    <property type="entry name" value="Upp_B"/>
</dbReference>
<dbReference type="InterPro" id="IPR050054">
    <property type="entry name" value="UPRTase/APRTase"/>
</dbReference>
<dbReference type="InterPro" id="IPR005765">
    <property type="entry name" value="Ura_phspho_trans"/>
</dbReference>
<dbReference type="NCBIfam" id="NF001097">
    <property type="entry name" value="PRK00129.1"/>
    <property type="match status" value="1"/>
</dbReference>
<dbReference type="NCBIfam" id="TIGR01091">
    <property type="entry name" value="upp"/>
    <property type="match status" value="1"/>
</dbReference>
<dbReference type="PANTHER" id="PTHR32315">
    <property type="entry name" value="ADENINE PHOSPHORIBOSYLTRANSFERASE"/>
    <property type="match status" value="1"/>
</dbReference>
<dbReference type="PANTHER" id="PTHR32315:SF4">
    <property type="entry name" value="URACIL PHOSPHORIBOSYLTRANSFERASE, CHLOROPLASTIC"/>
    <property type="match status" value="1"/>
</dbReference>
<dbReference type="Pfam" id="PF14681">
    <property type="entry name" value="UPRTase"/>
    <property type="match status" value="1"/>
</dbReference>
<dbReference type="SUPFAM" id="SSF53271">
    <property type="entry name" value="PRTase-like"/>
    <property type="match status" value="1"/>
</dbReference>
<keyword id="KW-0021">Allosteric enzyme</keyword>
<keyword id="KW-0328">Glycosyltransferase</keyword>
<keyword id="KW-0342">GTP-binding</keyword>
<keyword id="KW-0460">Magnesium</keyword>
<keyword id="KW-0547">Nucleotide-binding</keyword>
<keyword id="KW-0808">Transferase</keyword>
<comment type="function">
    <text evidence="1">Catalyzes the conversion of uracil and 5-phospho-alpha-D-ribose 1-diphosphate (PRPP) to UMP and diphosphate.</text>
</comment>
<comment type="catalytic activity">
    <reaction evidence="1">
        <text>UMP + diphosphate = 5-phospho-alpha-D-ribose 1-diphosphate + uracil</text>
        <dbReference type="Rhea" id="RHEA:13017"/>
        <dbReference type="ChEBI" id="CHEBI:17568"/>
        <dbReference type="ChEBI" id="CHEBI:33019"/>
        <dbReference type="ChEBI" id="CHEBI:57865"/>
        <dbReference type="ChEBI" id="CHEBI:58017"/>
        <dbReference type="EC" id="2.4.2.9"/>
    </reaction>
</comment>
<comment type="cofactor">
    <cofactor evidence="1">
        <name>Mg(2+)</name>
        <dbReference type="ChEBI" id="CHEBI:18420"/>
    </cofactor>
    <text evidence="1">Binds 1 Mg(2+) ion per subunit. The magnesium is bound as Mg-PRPP.</text>
</comment>
<comment type="activity regulation">
    <text evidence="1">Allosterically activated by GTP.</text>
</comment>
<comment type="pathway">
    <text evidence="1">Pyrimidine metabolism; UMP biosynthesis via salvage pathway; UMP from uracil: step 1/1.</text>
</comment>
<comment type="similarity">
    <text evidence="1">Belongs to the UPRTase family.</text>
</comment>
<organism>
    <name type="scientific">Bordetella bronchiseptica (strain ATCC BAA-588 / NCTC 13252 / RB50)</name>
    <name type="common">Alcaligenes bronchisepticus</name>
    <dbReference type="NCBI Taxonomy" id="257310"/>
    <lineage>
        <taxon>Bacteria</taxon>
        <taxon>Pseudomonadati</taxon>
        <taxon>Pseudomonadota</taxon>
        <taxon>Betaproteobacteria</taxon>
        <taxon>Burkholderiales</taxon>
        <taxon>Alcaligenaceae</taxon>
        <taxon>Bordetella</taxon>
    </lineage>
</organism>
<gene>
    <name evidence="1" type="primary">upp</name>
    <name type="ordered locus">BB1365</name>
</gene>
<proteinExistence type="inferred from homology"/>
<feature type="chain" id="PRO_0000120802" description="Uracil phosphoribosyltransferase">
    <location>
        <begin position="1"/>
        <end position="213"/>
    </location>
</feature>
<feature type="binding site" evidence="1">
    <location>
        <position position="78"/>
    </location>
    <ligand>
        <name>5-phospho-alpha-D-ribose 1-diphosphate</name>
        <dbReference type="ChEBI" id="CHEBI:58017"/>
    </ligand>
</feature>
<feature type="binding site" evidence="1">
    <location>
        <position position="103"/>
    </location>
    <ligand>
        <name>5-phospho-alpha-D-ribose 1-diphosphate</name>
        <dbReference type="ChEBI" id="CHEBI:58017"/>
    </ligand>
</feature>
<feature type="binding site" evidence="1">
    <location>
        <begin position="130"/>
        <end position="138"/>
    </location>
    <ligand>
        <name>5-phospho-alpha-D-ribose 1-diphosphate</name>
        <dbReference type="ChEBI" id="CHEBI:58017"/>
    </ligand>
</feature>
<feature type="binding site" evidence="1">
    <location>
        <position position="193"/>
    </location>
    <ligand>
        <name>uracil</name>
        <dbReference type="ChEBI" id="CHEBI:17568"/>
    </ligand>
</feature>
<feature type="binding site" evidence="1">
    <location>
        <begin position="198"/>
        <end position="200"/>
    </location>
    <ligand>
        <name>uracil</name>
        <dbReference type="ChEBI" id="CHEBI:17568"/>
    </ligand>
</feature>
<feature type="binding site" evidence="1">
    <location>
        <position position="199"/>
    </location>
    <ligand>
        <name>5-phospho-alpha-D-ribose 1-diphosphate</name>
        <dbReference type="ChEBI" id="CHEBI:58017"/>
    </ligand>
</feature>
<evidence type="ECO:0000255" key="1">
    <source>
        <dbReference type="HAMAP-Rule" id="MF_01218"/>
    </source>
</evidence>
<protein>
    <recommendedName>
        <fullName evidence="1">Uracil phosphoribosyltransferase</fullName>
        <ecNumber evidence="1">2.4.2.9</ecNumber>
    </recommendedName>
    <alternativeName>
        <fullName evidence="1">UMP pyrophosphorylase</fullName>
    </alternativeName>
    <alternativeName>
        <fullName evidence="1">UPRTase</fullName>
    </alternativeName>
</protein>
<name>UPP_BORBR</name>
<sequence>MPVHEIRHPLIRHKLGIMRRADLSTKSFRELSQEVAALLTYEATKDMPLAPASVEGWCGTVEVDKIAGKKVTVVPILRAGIGMLDGVLSLIPGAKVSVVGVARNEETLQAHTYLERLVGELDQRLALIVDPMLATGGSMVAAIDMLKRAGCREIRALTLVSAPEGIDAVLTAHPDVQIYTASIDQGLNENGYIMPGLGDAGDRIFGTTQKHAE</sequence>
<accession>Q7WMM5</accession>